<sequence>MAGQKIRIRLKAYDHEVIDSSARKIVDTVTRTGASVAGPVPLPTEKNVYCVIRSPHKYKDSREHFEMRTHKRLIDIIDPTPKTVDSLMRLDLPAGVDIEIKL</sequence>
<name>RS10_KINRD</name>
<protein>
    <recommendedName>
        <fullName evidence="1">Small ribosomal subunit protein uS10</fullName>
    </recommendedName>
    <alternativeName>
        <fullName evidence="2">30S ribosomal protein S10</fullName>
    </alternativeName>
</protein>
<gene>
    <name evidence="1" type="primary">rpsJ</name>
    <name type="ordered locus">Krad_0687</name>
</gene>
<dbReference type="EMBL" id="CP000750">
    <property type="protein sequence ID" value="ABS02176.1"/>
    <property type="molecule type" value="Genomic_DNA"/>
</dbReference>
<dbReference type="RefSeq" id="WP_012084982.1">
    <property type="nucleotide sequence ID" value="NC_009664.2"/>
</dbReference>
<dbReference type="SMR" id="A6W5T7"/>
<dbReference type="STRING" id="266940.Krad_0687"/>
<dbReference type="KEGG" id="kra:Krad_0687"/>
<dbReference type="eggNOG" id="COG0051">
    <property type="taxonomic scope" value="Bacteria"/>
</dbReference>
<dbReference type="HOGENOM" id="CLU_122625_1_3_11"/>
<dbReference type="OrthoDB" id="9804464at2"/>
<dbReference type="Proteomes" id="UP000001116">
    <property type="component" value="Chromosome"/>
</dbReference>
<dbReference type="GO" id="GO:1990904">
    <property type="term" value="C:ribonucleoprotein complex"/>
    <property type="evidence" value="ECO:0007669"/>
    <property type="project" value="UniProtKB-KW"/>
</dbReference>
<dbReference type="GO" id="GO:0005840">
    <property type="term" value="C:ribosome"/>
    <property type="evidence" value="ECO:0007669"/>
    <property type="project" value="UniProtKB-KW"/>
</dbReference>
<dbReference type="GO" id="GO:0003735">
    <property type="term" value="F:structural constituent of ribosome"/>
    <property type="evidence" value="ECO:0007669"/>
    <property type="project" value="InterPro"/>
</dbReference>
<dbReference type="GO" id="GO:0000049">
    <property type="term" value="F:tRNA binding"/>
    <property type="evidence" value="ECO:0007669"/>
    <property type="project" value="UniProtKB-UniRule"/>
</dbReference>
<dbReference type="GO" id="GO:0006412">
    <property type="term" value="P:translation"/>
    <property type="evidence" value="ECO:0007669"/>
    <property type="project" value="UniProtKB-UniRule"/>
</dbReference>
<dbReference type="FunFam" id="3.30.70.600:FF:000001">
    <property type="entry name" value="30S ribosomal protein S10"/>
    <property type="match status" value="1"/>
</dbReference>
<dbReference type="Gene3D" id="3.30.70.600">
    <property type="entry name" value="Ribosomal protein S10 domain"/>
    <property type="match status" value="1"/>
</dbReference>
<dbReference type="HAMAP" id="MF_00508">
    <property type="entry name" value="Ribosomal_uS10"/>
    <property type="match status" value="1"/>
</dbReference>
<dbReference type="InterPro" id="IPR001848">
    <property type="entry name" value="Ribosomal_uS10"/>
</dbReference>
<dbReference type="InterPro" id="IPR018268">
    <property type="entry name" value="Ribosomal_uS10_CS"/>
</dbReference>
<dbReference type="InterPro" id="IPR027486">
    <property type="entry name" value="Ribosomal_uS10_dom"/>
</dbReference>
<dbReference type="InterPro" id="IPR036838">
    <property type="entry name" value="Ribosomal_uS10_dom_sf"/>
</dbReference>
<dbReference type="NCBIfam" id="NF001861">
    <property type="entry name" value="PRK00596.1"/>
    <property type="match status" value="1"/>
</dbReference>
<dbReference type="NCBIfam" id="TIGR01049">
    <property type="entry name" value="rpsJ_bact"/>
    <property type="match status" value="1"/>
</dbReference>
<dbReference type="PANTHER" id="PTHR11700">
    <property type="entry name" value="30S RIBOSOMAL PROTEIN S10 FAMILY MEMBER"/>
    <property type="match status" value="1"/>
</dbReference>
<dbReference type="Pfam" id="PF00338">
    <property type="entry name" value="Ribosomal_S10"/>
    <property type="match status" value="1"/>
</dbReference>
<dbReference type="PRINTS" id="PR00971">
    <property type="entry name" value="RIBOSOMALS10"/>
</dbReference>
<dbReference type="SMART" id="SM01403">
    <property type="entry name" value="Ribosomal_S10"/>
    <property type="match status" value="1"/>
</dbReference>
<dbReference type="SUPFAM" id="SSF54999">
    <property type="entry name" value="Ribosomal protein S10"/>
    <property type="match status" value="1"/>
</dbReference>
<dbReference type="PROSITE" id="PS00361">
    <property type="entry name" value="RIBOSOMAL_S10"/>
    <property type="match status" value="1"/>
</dbReference>
<keyword id="KW-1185">Reference proteome</keyword>
<keyword id="KW-0687">Ribonucleoprotein</keyword>
<keyword id="KW-0689">Ribosomal protein</keyword>
<reference key="1">
    <citation type="journal article" date="2008" name="PLoS ONE">
        <title>Survival in nuclear waste, extreme resistance, and potential applications gleaned from the genome sequence of Kineococcus radiotolerans SRS30216.</title>
        <authorList>
            <person name="Bagwell C.E."/>
            <person name="Bhat S."/>
            <person name="Hawkins G.M."/>
            <person name="Smith B.W."/>
            <person name="Biswas T."/>
            <person name="Hoover T.R."/>
            <person name="Saunders E."/>
            <person name="Han C.S."/>
            <person name="Tsodikov O.V."/>
            <person name="Shimkets L.J."/>
        </authorList>
    </citation>
    <scope>NUCLEOTIDE SEQUENCE [LARGE SCALE GENOMIC DNA]</scope>
    <source>
        <strain>ATCC BAA-149 / DSM 14245 / SRS30216</strain>
    </source>
</reference>
<proteinExistence type="inferred from homology"/>
<organism>
    <name type="scientific">Kineococcus radiotolerans (strain ATCC BAA-149 / DSM 14245 / SRS30216)</name>
    <dbReference type="NCBI Taxonomy" id="266940"/>
    <lineage>
        <taxon>Bacteria</taxon>
        <taxon>Bacillati</taxon>
        <taxon>Actinomycetota</taxon>
        <taxon>Actinomycetes</taxon>
        <taxon>Kineosporiales</taxon>
        <taxon>Kineosporiaceae</taxon>
        <taxon>Kineococcus</taxon>
    </lineage>
</organism>
<comment type="function">
    <text evidence="1">Involved in the binding of tRNA to the ribosomes.</text>
</comment>
<comment type="subunit">
    <text evidence="1">Part of the 30S ribosomal subunit.</text>
</comment>
<comment type="similarity">
    <text evidence="1">Belongs to the universal ribosomal protein uS10 family.</text>
</comment>
<evidence type="ECO:0000255" key="1">
    <source>
        <dbReference type="HAMAP-Rule" id="MF_00508"/>
    </source>
</evidence>
<evidence type="ECO:0000305" key="2"/>
<accession>A6W5T7</accession>
<feature type="chain" id="PRO_1000081553" description="Small ribosomal subunit protein uS10">
    <location>
        <begin position="1"/>
        <end position="102"/>
    </location>
</feature>